<reference key="1">
    <citation type="journal article" date="2001" name="Science">
        <title>The genome of the natural genetic engineer Agrobacterium tumefaciens C58.</title>
        <authorList>
            <person name="Wood D.W."/>
            <person name="Setubal J.C."/>
            <person name="Kaul R."/>
            <person name="Monks D.E."/>
            <person name="Kitajima J.P."/>
            <person name="Okura V.K."/>
            <person name="Zhou Y."/>
            <person name="Chen L."/>
            <person name="Wood G.E."/>
            <person name="Almeida N.F. Jr."/>
            <person name="Woo L."/>
            <person name="Chen Y."/>
            <person name="Paulsen I.T."/>
            <person name="Eisen J.A."/>
            <person name="Karp P.D."/>
            <person name="Bovee D. Sr."/>
            <person name="Chapman P."/>
            <person name="Clendenning J."/>
            <person name="Deatherage G."/>
            <person name="Gillet W."/>
            <person name="Grant C."/>
            <person name="Kutyavin T."/>
            <person name="Levy R."/>
            <person name="Li M.-J."/>
            <person name="McClelland E."/>
            <person name="Palmieri A."/>
            <person name="Raymond C."/>
            <person name="Rouse G."/>
            <person name="Saenphimmachak C."/>
            <person name="Wu Z."/>
            <person name="Romero P."/>
            <person name="Gordon D."/>
            <person name="Zhang S."/>
            <person name="Yoo H."/>
            <person name="Tao Y."/>
            <person name="Biddle P."/>
            <person name="Jung M."/>
            <person name="Krespan W."/>
            <person name="Perry M."/>
            <person name="Gordon-Kamm B."/>
            <person name="Liao L."/>
            <person name="Kim S."/>
            <person name="Hendrick C."/>
            <person name="Zhao Z.-Y."/>
            <person name="Dolan M."/>
            <person name="Chumley F."/>
            <person name="Tingey S.V."/>
            <person name="Tomb J.-F."/>
            <person name="Gordon M.P."/>
            <person name="Olson M.V."/>
            <person name="Nester E.W."/>
        </authorList>
    </citation>
    <scope>NUCLEOTIDE SEQUENCE [LARGE SCALE GENOMIC DNA]</scope>
    <source>
        <strain>C58 / ATCC 33970</strain>
    </source>
</reference>
<reference key="2">
    <citation type="journal article" date="2001" name="Science">
        <title>Genome sequence of the plant pathogen and biotechnology agent Agrobacterium tumefaciens C58.</title>
        <authorList>
            <person name="Goodner B."/>
            <person name="Hinkle G."/>
            <person name="Gattung S."/>
            <person name="Miller N."/>
            <person name="Blanchard M."/>
            <person name="Qurollo B."/>
            <person name="Goldman B.S."/>
            <person name="Cao Y."/>
            <person name="Askenazi M."/>
            <person name="Halling C."/>
            <person name="Mullin L."/>
            <person name="Houmiel K."/>
            <person name="Gordon J."/>
            <person name="Vaudin M."/>
            <person name="Iartchouk O."/>
            <person name="Epp A."/>
            <person name="Liu F."/>
            <person name="Wollam C."/>
            <person name="Allinger M."/>
            <person name="Doughty D."/>
            <person name="Scott C."/>
            <person name="Lappas C."/>
            <person name="Markelz B."/>
            <person name="Flanagan C."/>
            <person name="Crowell C."/>
            <person name="Gurson J."/>
            <person name="Lomo C."/>
            <person name="Sear C."/>
            <person name="Strub G."/>
            <person name="Cielo C."/>
            <person name="Slater S."/>
        </authorList>
    </citation>
    <scope>NUCLEOTIDE SEQUENCE [LARGE SCALE GENOMIC DNA]</scope>
    <source>
        <strain>C58 / ATCC 33970</strain>
    </source>
</reference>
<dbReference type="EC" id="4.1.99.17" evidence="1"/>
<dbReference type="EMBL" id="AE007869">
    <property type="protein sequence ID" value="AAK88293.2"/>
    <property type="molecule type" value="Genomic_DNA"/>
</dbReference>
<dbReference type="PIR" id="AH2891">
    <property type="entry name" value="AH2891"/>
</dbReference>
<dbReference type="PIR" id="D97667">
    <property type="entry name" value="D97667"/>
</dbReference>
<dbReference type="RefSeq" id="NP_355508.2">
    <property type="nucleotide sequence ID" value="NC_003062.2"/>
</dbReference>
<dbReference type="RefSeq" id="WP_010972409.1">
    <property type="nucleotide sequence ID" value="NC_003062.2"/>
</dbReference>
<dbReference type="SMR" id="Q8UCC9"/>
<dbReference type="STRING" id="176299.Atu2569"/>
<dbReference type="EnsemblBacteria" id="AAK88293">
    <property type="protein sequence ID" value="AAK88293"/>
    <property type="gene ID" value="Atu2569"/>
</dbReference>
<dbReference type="GeneID" id="1134607"/>
<dbReference type="KEGG" id="atu:Atu2569"/>
<dbReference type="PATRIC" id="fig|176299.10.peg.2573"/>
<dbReference type="eggNOG" id="COG0422">
    <property type="taxonomic scope" value="Bacteria"/>
</dbReference>
<dbReference type="HOGENOM" id="CLU_013181_2_1_5"/>
<dbReference type="OrthoDB" id="9805897at2"/>
<dbReference type="PhylomeDB" id="Q8UCC9"/>
<dbReference type="BioCyc" id="AGRO:ATU2569-MONOMER"/>
<dbReference type="UniPathway" id="UPA00060"/>
<dbReference type="Proteomes" id="UP000000813">
    <property type="component" value="Chromosome circular"/>
</dbReference>
<dbReference type="GO" id="GO:0005829">
    <property type="term" value="C:cytosol"/>
    <property type="evidence" value="ECO:0007669"/>
    <property type="project" value="TreeGrafter"/>
</dbReference>
<dbReference type="GO" id="GO:0051539">
    <property type="term" value="F:4 iron, 4 sulfur cluster binding"/>
    <property type="evidence" value="ECO:0007669"/>
    <property type="project" value="UniProtKB-KW"/>
</dbReference>
<dbReference type="GO" id="GO:0016830">
    <property type="term" value="F:carbon-carbon lyase activity"/>
    <property type="evidence" value="ECO:0007669"/>
    <property type="project" value="InterPro"/>
</dbReference>
<dbReference type="GO" id="GO:0008270">
    <property type="term" value="F:zinc ion binding"/>
    <property type="evidence" value="ECO:0007669"/>
    <property type="project" value="UniProtKB-UniRule"/>
</dbReference>
<dbReference type="GO" id="GO:0009228">
    <property type="term" value="P:thiamine biosynthetic process"/>
    <property type="evidence" value="ECO:0007669"/>
    <property type="project" value="UniProtKB-KW"/>
</dbReference>
<dbReference type="GO" id="GO:0009229">
    <property type="term" value="P:thiamine diphosphate biosynthetic process"/>
    <property type="evidence" value="ECO:0007669"/>
    <property type="project" value="UniProtKB-UniRule"/>
</dbReference>
<dbReference type="FunFam" id="3.20.20.540:FF:000001">
    <property type="entry name" value="Phosphomethylpyrimidine synthase"/>
    <property type="match status" value="1"/>
</dbReference>
<dbReference type="Gene3D" id="6.10.250.620">
    <property type="match status" value="1"/>
</dbReference>
<dbReference type="Gene3D" id="3.20.20.540">
    <property type="entry name" value="Radical SAM ThiC family, central domain"/>
    <property type="match status" value="1"/>
</dbReference>
<dbReference type="HAMAP" id="MF_00089">
    <property type="entry name" value="ThiC"/>
    <property type="match status" value="1"/>
</dbReference>
<dbReference type="InterPro" id="IPR037509">
    <property type="entry name" value="ThiC"/>
</dbReference>
<dbReference type="InterPro" id="IPR025747">
    <property type="entry name" value="ThiC-associated_dom"/>
</dbReference>
<dbReference type="InterPro" id="IPR038521">
    <property type="entry name" value="ThiC/Bza_core_dom"/>
</dbReference>
<dbReference type="InterPro" id="IPR002817">
    <property type="entry name" value="ThiC/BzaA/B"/>
</dbReference>
<dbReference type="NCBIfam" id="NF006763">
    <property type="entry name" value="PRK09284.1"/>
    <property type="match status" value="1"/>
</dbReference>
<dbReference type="NCBIfam" id="NF009895">
    <property type="entry name" value="PRK13352.1"/>
    <property type="match status" value="1"/>
</dbReference>
<dbReference type="NCBIfam" id="TIGR00190">
    <property type="entry name" value="thiC"/>
    <property type="match status" value="1"/>
</dbReference>
<dbReference type="PANTHER" id="PTHR30557:SF1">
    <property type="entry name" value="PHOSPHOMETHYLPYRIMIDINE SYNTHASE, CHLOROPLASTIC"/>
    <property type="match status" value="1"/>
</dbReference>
<dbReference type="PANTHER" id="PTHR30557">
    <property type="entry name" value="THIAMINE BIOSYNTHESIS PROTEIN THIC"/>
    <property type="match status" value="1"/>
</dbReference>
<dbReference type="Pfam" id="PF13667">
    <property type="entry name" value="ThiC-associated"/>
    <property type="match status" value="1"/>
</dbReference>
<dbReference type="Pfam" id="PF01964">
    <property type="entry name" value="ThiC_Rad_SAM"/>
    <property type="match status" value="1"/>
</dbReference>
<dbReference type="SFLD" id="SFLDF00407">
    <property type="entry name" value="phosphomethylpyrimidine_syntha"/>
    <property type="match status" value="1"/>
</dbReference>
<dbReference type="SFLD" id="SFLDG01114">
    <property type="entry name" value="phosphomethylpyrimidine_syntha"/>
    <property type="match status" value="1"/>
</dbReference>
<dbReference type="SFLD" id="SFLDS00113">
    <property type="entry name" value="Radical_SAM_Phosphomethylpyrim"/>
    <property type="match status" value="1"/>
</dbReference>
<organism>
    <name type="scientific">Agrobacterium fabrum (strain C58 / ATCC 33970)</name>
    <name type="common">Agrobacterium tumefaciens (strain C58)</name>
    <dbReference type="NCBI Taxonomy" id="176299"/>
    <lineage>
        <taxon>Bacteria</taxon>
        <taxon>Pseudomonadati</taxon>
        <taxon>Pseudomonadota</taxon>
        <taxon>Alphaproteobacteria</taxon>
        <taxon>Hyphomicrobiales</taxon>
        <taxon>Rhizobiaceae</taxon>
        <taxon>Rhizobium/Agrobacterium group</taxon>
        <taxon>Agrobacterium</taxon>
        <taxon>Agrobacterium tumefaciens complex</taxon>
    </lineage>
</organism>
<comment type="function">
    <text evidence="1">Catalyzes the synthesis of the hydroxymethylpyrimidine phosphate (HMP-P) moiety of thiamine from aminoimidazole ribotide (AIR) in a radical S-adenosyl-L-methionine (SAM)-dependent reaction.</text>
</comment>
<comment type="catalytic activity">
    <reaction evidence="1">
        <text>5-amino-1-(5-phospho-beta-D-ribosyl)imidazole + S-adenosyl-L-methionine = 4-amino-2-methyl-5-(phosphooxymethyl)pyrimidine + CO + 5'-deoxyadenosine + formate + L-methionine + 3 H(+)</text>
        <dbReference type="Rhea" id="RHEA:24840"/>
        <dbReference type="ChEBI" id="CHEBI:15378"/>
        <dbReference type="ChEBI" id="CHEBI:15740"/>
        <dbReference type="ChEBI" id="CHEBI:17245"/>
        <dbReference type="ChEBI" id="CHEBI:17319"/>
        <dbReference type="ChEBI" id="CHEBI:57844"/>
        <dbReference type="ChEBI" id="CHEBI:58354"/>
        <dbReference type="ChEBI" id="CHEBI:59789"/>
        <dbReference type="ChEBI" id="CHEBI:137981"/>
        <dbReference type="EC" id="4.1.99.17"/>
    </reaction>
</comment>
<comment type="cofactor">
    <cofactor evidence="1">
        <name>[4Fe-4S] cluster</name>
        <dbReference type="ChEBI" id="CHEBI:49883"/>
    </cofactor>
    <text evidence="1">Binds 1 [4Fe-4S] cluster per subunit. The cluster is coordinated with 3 cysteines and an exchangeable S-adenosyl-L-methionine.</text>
</comment>
<comment type="pathway">
    <text evidence="1">Cofactor biosynthesis; thiamine diphosphate biosynthesis.</text>
</comment>
<comment type="subunit">
    <text evidence="1">Homodimer.</text>
</comment>
<comment type="similarity">
    <text evidence="1">Belongs to the ThiC family.</text>
</comment>
<keyword id="KW-0004">4Fe-4S</keyword>
<keyword id="KW-0408">Iron</keyword>
<keyword id="KW-0411">Iron-sulfur</keyword>
<keyword id="KW-0456">Lyase</keyword>
<keyword id="KW-0479">Metal-binding</keyword>
<keyword id="KW-1185">Reference proteome</keyword>
<keyword id="KW-0949">S-adenosyl-L-methionine</keyword>
<keyword id="KW-0784">Thiamine biosynthesis</keyword>
<keyword id="KW-0862">Zinc</keyword>
<proteinExistence type="inferred from homology"/>
<name>THIC_AGRFC</name>
<accession>Q8UCC9</accession>
<gene>
    <name evidence="1" type="primary">thiC</name>
    <name type="ordered locus">Atu2569</name>
    <name type="ORF">AGR_C_4656</name>
</gene>
<protein>
    <recommendedName>
        <fullName evidence="1">Phosphomethylpyrimidine synthase</fullName>
        <ecNumber evidence="1">4.1.99.17</ecNumber>
    </recommendedName>
    <alternativeName>
        <fullName evidence="1">Hydroxymethylpyrimidine phosphate synthase</fullName>
        <shortName evidence="1">HMP-P synthase</shortName>
        <shortName evidence="1">HMP-phosphate synthase</shortName>
        <shortName evidence="1">HMPP synthase</shortName>
    </alternativeName>
    <alternativeName>
        <fullName evidence="1">Thiamine biosynthesis protein ThiC</fullName>
    </alternativeName>
</protein>
<evidence type="ECO:0000255" key="1">
    <source>
        <dbReference type="HAMAP-Rule" id="MF_00089"/>
    </source>
</evidence>
<sequence>MNIVAKTIPLVVTTGPHAASTKIHKPGILHPHIRVPMREIAVHPTAGEPPVTVYDSSGPYTDPSHPVLIENGLPRLRHDWVVARGDVEAYEGRHVKPEDNGFATGERLTPEFSVRHQPLKATAGKAVTQLAYARAGIITPEMEFIAIRENLGREAAKEKPTRDGESFGAHIPDYVTAEFVRQEVASGRAIIPANINHPELEPMIIGRNFLVKINANIGNSAVTSSMAEEVEKMVWAIRWGADTVMDLSTGRNIHNIREWIIRNSPVPIGTVPLYQALEKVNGIAEDLNWEVFRDTLIEQAEQGVDYFTIHAGVRLHYIPLTVNRVTGIVSRGGSIMAKWCLHHHKESFLYEHFEEICDICRAYDVSFSLGDGLRPGSIADANDAAQFAELETLGELTQIAWARDCQVMIEGPGHVPMHKIKENMDKQLKTCGEAPFYTLGPLTTDIAPGYDHITSGIGAAMIGWFGTAMLCYVTPKEHLGLPDRNDVKVGVITYKIAAHAADLAKGHPAAQVRDDALSRARFEFRWEDQFNLSLDPDTARSFHDETLPKEAHKVAHFCSMCGPKFCSMRISHDIRAEAQKEGLEAMAARFKEGGELYMPLPTPASAE</sequence>
<feature type="chain" id="PRO_0000152778" description="Phosphomethylpyrimidine synthase">
    <location>
        <begin position="1"/>
        <end position="607"/>
    </location>
</feature>
<feature type="binding site" evidence="1">
    <location>
        <position position="216"/>
    </location>
    <ligand>
        <name>substrate</name>
    </ligand>
</feature>
<feature type="binding site" evidence="1">
    <location>
        <position position="245"/>
    </location>
    <ligand>
        <name>substrate</name>
    </ligand>
</feature>
<feature type="binding site" evidence="1">
    <location>
        <position position="274"/>
    </location>
    <ligand>
        <name>substrate</name>
    </ligand>
</feature>
<feature type="binding site" evidence="1">
    <location>
        <position position="310"/>
    </location>
    <ligand>
        <name>substrate</name>
    </ligand>
</feature>
<feature type="binding site" evidence="1">
    <location>
        <begin position="330"/>
        <end position="332"/>
    </location>
    <ligand>
        <name>substrate</name>
    </ligand>
</feature>
<feature type="binding site" evidence="1">
    <location>
        <begin position="371"/>
        <end position="374"/>
    </location>
    <ligand>
        <name>substrate</name>
    </ligand>
</feature>
<feature type="binding site" evidence="1">
    <location>
        <position position="410"/>
    </location>
    <ligand>
        <name>substrate</name>
    </ligand>
</feature>
<feature type="binding site" evidence="1">
    <location>
        <position position="414"/>
    </location>
    <ligand>
        <name>Zn(2+)</name>
        <dbReference type="ChEBI" id="CHEBI:29105"/>
    </ligand>
</feature>
<feature type="binding site" evidence="1">
    <location>
        <position position="437"/>
    </location>
    <ligand>
        <name>substrate</name>
    </ligand>
</feature>
<feature type="binding site" evidence="1">
    <location>
        <position position="478"/>
    </location>
    <ligand>
        <name>Zn(2+)</name>
        <dbReference type="ChEBI" id="CHEBI:29105"/>
    </ligand>
</feature>
<feature type="binding site" evidence="1">
    <location>
        <position position="558"/>
    </location>
    <ligand>
        <name>[4Fe-4S] cluster</name>
        <dbReference type="ChEBI" id="CHEBI:49883"/>
        <note>4Fe-4S-S-AdoMet</note>
    </ligand>
</feature>
<feature type="binding site" evidence="1">
    <location>
        <position position="561"/>
    </location>
    <ligand>
        <name>[4Fe-4S] cluster</name>
        <dbReference type="ChEBI" id="CHEBI:49883"/>
        <note>4Fe-4S-S-AdoMet</note>
    </ligand>
</feature>
<feature type="binding site" evidence="1">
    <location>
        <position position="566"/>
    </location>
    <ligand>
        <name>[4Fe-4S] cluster</name>
        <dbReference type="ChEBI" id="CHEBI:49883"/>
        <note>4Fe-4S-S-AdoMet</note>
    </ligand>
</feature>